<organism>
    <name type="scientific">Shewanella denitrificans (strain OS217 / ATCC BAA-1090 / DSM 15013)</name>
    <dbReference type="NCBI Taxonomy" id="318161"/>
    <lineage>
        <taxon>Bacteria</taxon>
        <taxon>Pseudomonadati</taxon>
        <taxon>Pseudomonadota</taxon>
        <taxon>Gammaproteobacteria</taxon>
        <taxon>Alteromonadales</taxon>
        <taxon>Shewanellaceae</taxon>
        <taxon>Shewanella</taxon>
    </lineage>
</organism>
<name>ZIPA_SHEDO</name>
<dbReference type="EMBL" id="CP000302">
    <property type="protein sequence ID" value="ABE55795.1"/>
    <property type="molecule type" value="Genomic_DNA"/>
</dbReference>
<dbReference type="RefSeq" id="WP_011496946.1">
    <property type="nucleotide sequence ID" value="NC_007954.1"/>
</dbReference>
<dbReference type="SMR" id="Q12L81"/>
<dbReference type="STRING" id="318161.Sden_2515"/>
<dbReference type="KEGG" id="sdn:Sden_2515"/>
<dbReference type="eggNOG" id="COG3115">
    <property type="taxonomic scope" value="Bacteria"/>
</dbReference>
<dbReference type="HOGENOM" id="CLU_030174_1_0_6"/>
<dbReference type="OrthoDB" id="7054914at2"/>
<dbReference type="Proteomes" id="UP000001982">
    <property type="component" value="Chromosome"/>
</dbReference>
<dbReference type="GO" id="GO:0032153">
    <property type="term" value="C:cell division site"/>
    <property type="evidence" value="ECO:0007669"/>
    <property type="project" value="UniProtKB-UniRule"/>
</dbReference>
<dbReference type="GO" id="GO:0005886">
    <property type="term" value="C:plasma membrane"/>
    <property type="evidence" value="ECO:0007669"/>
    <property type="project" value="UniProtKB-SubCell"/>
</dbReference>
<dbReference type="GO" id="GO:0000917">
    <property type="term" value="P:division septum assembly"/>
    <property type="evidence" value="ECO:0007669"/>
    <property type="project" value="TreeGrafter"/>
</dbReference>
<dbReference type="GO" id="GO:0043093">
    <property type="term" value="P:FtsZ-dependent cytokinesis"/>
    <property type="evidence" value="ECO:0007669"/>
    <property type="project" value="UniProtKB-UniRule"/>
</dbReference>
<dbReference type="Gene3D" id="3.30.1400.10">
    <property type="entry name" value="ZipA, C-terminal FtsZ-binding domain"/>
    <property type="match status" value="1"/>
</dbReference>
<dbReference type="HAMAP" id="MF_00509">
    <property type="entry name" value="ZipA"/>
    <property type="match status" value="1"/>
</dbReference>
<dbReference type="InterPro" id="IPR011919">
    <property type="entry name" value="Cell_div_ZipA"/>
</dbReference>
<dbReference type="InterPro" id="IPR007449">
    <property type="entry name" value="ZipA_FtsZ-bd_C"/>
</dbReference>
<dbReference type="InterPro" id="IPR036765">
    <property type="entry name" value="ZipA_FtsZ-bd_C_sf"/>
</dbReference>
<dbReference type="NCBIfam" id="TIGR02205">
    <property type="entry name" value="septum_zipA"/>
    <property type="match status" value="1"/>
</dbReference>
<dbReference type="PANTHER" id="PTHR38685">
    <property type="entry name" value="CELL DIVISION PROTEIN ZIPA"/>
    <property type="match status" value="1"/>
</dbReference>
<dbReference type="PANTHER" id="PTHR38685:SF1">
    <property type="entry name" value="CELL DIVISION PROTEIN ZIPA"/>
    <property type="match status" value="1"/>
</dbReference>
<dbReference type="Pfam" id="PF04354">
    <property type="entry name" value="ZipA_C"/>
    <property type="match status" value="1"/>
</dbReference>
<dbReference type="SMART" id="SM00771">
    <property type="entry name" value="ZipA_C"/>
    <property type="match status" value="1"/>
</dbReference>
<dbReference type="SUPFAM" id="SSF64383">
    <property type="entry name" value="Cell-division protein ZipA, C-terminal domain"/>
    <property type="match status" value="1"/>
</dbReference>
<comment type="function">
    <text evidence="1">Essential cell division protein that stabilizes the FtsZ protofilaments by cross-linking them and that serves as a cytoplasmic membrane anchor for the Z ring. Also required for the recruitment to the septal ring of downstream cell division proteins.</text>
</comment>
<comment type="subunit">
    <text evidence="1">Interacts with FtsZ via their C-terminal domains.</text>
</comment>
<comment type="subcellular location">
    <subcellularLocation>
        <location evidence="1">Cell inner membrane</location>
        <topology evidence="1">Single-pass type I membrane protein</topology>
    </subcellularLocation>
    <text evidence="1">Localizes to the Z ring in an FtsZ-dependent manner.</text>
</comment>
<comment type="similarity">
    <text evidence="1">Belongs to the ZipA family.</text>
</comment>
<feature type="chain" id="PRO_1000015154" description="Cell division protein ZipA">
    <location>
        <begin position="1"/>
        <end position="336"/>
    </location>
</feature>
<feature type="topological domain" description="Periplasmic" evidence="1">
    <location>
        <begin position="1"/>
        <end position="6"/>
    </location>
</feature>
<feature type="transmembrane region" description="Helical" evidence="1">
    <location>
        <begin position="7"/>
        <end position="27"/>
    </location>
</feature>
<feature type="topological domain" description="Cytoplasmic" evidence="1">
    <location>
        <begin position="28"/>
        <end position="336"/>
    </location>
</feature>
<feature type="region of interest" description="Disordered" evidence="2">
    <location>
        <begin position="31"/>
        <end position="118"/>
    </location>
</feature>
<feature type="region of interest" description="Disordered" evidence="2">
    <location>
        <begin position="174"/>
        <end position="200"/>
    </location>
</feature>
<feature type="compositionally biased region" description="Polar residues" evidence="2">
    <location>
        <begin position="73"/>
        <end position="91"/>
    </location>
</feature>
<feature type="compositionally biased region" description="Basic and acidic residues" evidence="2">
    <location>
        <begin position="108"/>
        <end position="118"/>
    </location>
</feature>
<feature type="compositionally biased region" description="Low complexity" evidence="2">
    <location>
        <begin position="179"/>
        <end position="193"/>
    </location>
</feature>
<keyword id="KW-0131">Cell cycle</keyword>
<keyword id="KW-0132">Cell division</keyword>
<keyword id="KW-0997">Cell inner membrane</keyword>
<keyword id="KW-1003">Cell membrane</keyword>
<keyword id="KW-0472">Membrane</keyword>
<keyword id="KW-1185">Reference proteome</keyword>
<keyword id="KW-0812">Transmembrane</keyword>
<keyword id="KW-1133">Transmembrane helix</keyword>
<evidence type="ECO:0000255" key="1">
    <source>
        <dbReference type="HAMAP-Rule" id="MF_00509"/>
    </source>
</evidence>
<evidence type="ECO:0000256" key="2">
    <source>
        <dbReference type="SAM" id="MobiDB-lite"/>
    </source>
</evidence>
<accession>Q12L81</accession>
<proteinExistence type="inferred from homology"/>
<gene>
    <name evidence="1" type="primary">zipA</name>
    <name type="ordered locus">Sden_2515</name>
</gene>
<reference key="1">
    <citation type="submission" date="2006-03" db="EMBL/GenBank/DDBJ databases">
        <title>Complete sequence of Shewanella denitrificans OS217.</title>
        <authorList>
            <consortium name="US DOE Joint Genome Institute"/>
            <person name="Copeland A."/>
            <person name="Lucas S."/>
            <person name="Lapidus A."/>
            <person name="Barry K."/>
            <person name="Detter J.C."/>
            <person name="Glavina del Rio T."/>
            <person name="Hammon N."/>
            <person name="Israni S."/>
            <person name="Dalin E."/>
            <person name="Tice H."/>
            <person name="Pitluck S."/>
            <person name="Brettin T."/>
            <person name="Bruce D."/>
            <person name="Han C."/>
            <person name="Tapia R."/>
            <person name="Gilna P."/>
            <person name="Kiss H."/>
            <person name="Schmutz J."/>
            <person name="Larimer F."/>
            <person name="Land M."/>
            <person name="Hauser L."/>
            <person name="Kyrpides N."/>
            <person name="Lykidis A."/>
            <person name="Richardson P."/>
        </authorList>
    </citation>
    <scope>NUCLEOTIDE SEQUENCE [LARGE SCALE GENOMIC DNA]</scope>
    <source>
        <strain>OS217 / ATCC BAA-1090 / DSM 15013</strain>
    </source>
</reference>
<sequence length="336" mass="36676">MEDLQLVLFVLGAIAIIAVLVHGFWSIRKQQPKPIKERTRAQNISEAQRRDSQGFDADGIGAVRVRKPGTEDLPSSRNHTSVPVMTLQKASATDAGVASSHGYSPERTTAERAEPVRAERAATNATVAGSMNTQPVTPQPASYGVQGVTAEVKQSVEPQTITPSQHVHIESPKYGATTQASPQPASPVQSQAPREPEPLGEPQDVLVLHVVAHEGQEIQGAELLPCLLSLNFKFGDMNIFHRHSDNAGNGKVLFSLANMMKPGVFDPDNMEQFCTQGIVMFMTLPCHGEAQHNFSIMLNSAEQLADDLGAIVLDEQRKVWTEHNKQDYLRRIKAIV</sequence>
<protein>
    <recommendedName>
        <fullName evidence="1">Cell division protein ZipA</fullName>
    </recommendedName>
</protein>